<proteinExistence type="inferred from homology"/>
<protein>
    <recommendedName>
        <fullName evidence="1">Large ribosomal subunit protein uL29</fullName>
    </recommendedName>
    <alternativeName>
        <fullName evidence="2">50S ribosomal protein L29</fullName>
    </alternativeName>
</protein>
<sequence>MKAKELREKSVEELNTELLNLLREQFNLRMQAASGQLQQSHLLKQVRRDVARVKTLLTEKAGA</sequence>
<evidence type="ECO:0000255" key="1">
    <source>
        <dbReference type="HAMAP-Rule" id="MF_00374"/>
    </source>
</evidence>
<evidence type="ECO:0000305" key="2"/>
<keyword id="KW-0687">Ribonucleoprotein</keyword>
<keyword id="KW-0689">Ribosomal protein</keyword>
<organism>
    <name type="scientific">Salmonella enteritidis PT4 (strain P125109)</name>
    <dbReference type="NCBI Taxonomy" id="550537"/>
    <lineage>
        <taxon>Bacteria</taxon>
        <taxon>Pseudomonadati</taxon>
        <taxon>Pseudomonadota</taxon>
        <taxon>Gammaproteobacteria</taxon>
        <taxon>Enterobacterales</taxon>
        <taxon>Enterobacteriaceae</taxon>
        <taxon>Salmonella</taxon>
    </lineage>
</organism>
<name>RL29_SALEP</name>
<comment type="similarity">
    <text evidence="1">Belongs to the universal ribosomal protein uL29 family.</text>
</comment>
<reference key="1">
    <citation type="journal article" date="2008" name="Genome Res.">
        <title>Comparative genome analysis of Salmonella enteritidis PT4 and Salmonella gallinarum 287/91 provides insights into evolutionary and host adaptation pathways.</title>
        <authorList>
            <person name="Thomson N.R."/>
            <person name="Clayton D.J."/>
            <person name="Windhorst D."/>
            <person name="Vernikos G."/>
            <person name="Davidson S."/>
            <person name="Churcher C."/>
            <person name="Quail M.A."/>
            <person name="Stevens M."/>
            <person name="Jones M.A."/>
            <person name="Watson M."/>
            <person name="Barron A."/>
            <person name="Layton A."/>
            <person name="Pickard D."/>
            <person name="Kingsley R.A."/>
            <person name="Bignell A."/>
            <person name="Clark L."/>
            <person name="Harris B."/>
            <person name="Ormond D."/>
            <person name="Abdellah Z."/>
            <person name="Brooks K."/>
            <person name="Cherevach I."/>
            <person name="Chillingworth T."/>
            <person name="Woodward J."/>
            <person name="Norberczak H."/>
            <person name="Lord A."/>
            <person name="Arrowsmith C."/>
            <person name="Jagels K."/>
            <person name="Moule S."/>
            <person name="Mungall K."/>
            <person name="Saunders M."/>
            <person name="Whitehead S."/>
            <person name="Chabalgoity J.A."/>
            <person name="Maskell D."/>
            <person name="Humphreys T."/>
            <person name="Roberts M."/>
            <person name="Barrow P.A."/>
            <person name="Dougan G."/>
            <person name="Parkhill J."/>
        </authorList>
    </citation>
    <scope>NUCLEOTIDE SEQUENCE [LARGE SCALE GENOMIC DNA]</scope>
    <source>
        <strain>P125109</strain>
    </source>
</reference>
<dbReference type="EMBL" id="AM933172">
    <property type="protein sequence ID" value="CAR34835.1"/>
    <property type="molecule type" value="Genomic_DNA"/>
</dbReference>
<dbReference type="RefSeq" id="WP_000644742.1">
    <property type="nucleotide sequence ID" value="NC_011294.1"/>
</dbReference>
<dbReference type="SMR" id="B5R283"/>
<dbReference type="GeneID" id="93035739"/>
<dbReference type="KEGG" id="set:SEN3260"/>
<dbReference type="HOGENOM" id="CLU_158491_1_2_6"/>
<dbReference type="Proteomes" id="UP000000613">
    <property type="component" value="Chromosome"/>
</dbReference>
<dbReference type="GO" id="GO:0022625">
    <property type="term" value="C:cytosolic large ribosomal subunit"/>
    <property type="evidence" value="ECO:0007669"/>
    <property type="project" value="TreeGrafter"/>
</dbReference>
<dbReference type="GO" id="GO:0003735">
    <property type="term" value="F:structural constituent of ribosome"/>
    <property type="evidence" value="ECO:0007669"/>
    <property type="project" value="InterPro"/>
</dbReference>
<dbReference type="GO" id="GO:0006412">
    <property type="term" value="P:translation"/>
    <property type="evidence" value="ECO:0007669"/>
    <property type="project" value="UniProtKB-UniRule"/>
</dbReference>
<dbReference type="CDD" id="cd00427">
    <property type="entry name" value="Ribosomal_L29_HIP"/>
    <property type="match status" value="1"/>
</dbReference>
<dbReference type="Gene3D" id="6.10.140.1970">
    <property type="match status" value="1"/>
</dbReference>
<dbReference type="HAMAP" id="MF_00374">
    <property type="entry name" value="Ribosomal_uL29"/>
    <property type="match status" value="1"/>
</dbReference>
<dbReference type="InterPro" id="IPR050063">
    <property type="entry name" value="Ribosomal_protein_uL29"/>
</dbReference>
<dbReference type="InterPro" id="IPR001854">
    <property type="entry name" value="Ribosomal_uL29"/>
</dbReference>
<dbReference type="InterPro" id="IPR018254">
    <property type="entry name" value="Ribosomal_uL29_CS"/>
</dbReference>
<dbReference type="InterPro" id="IPR036049">
    <property type="entry name" value="Ribosomal_uL29_sf"/>
</dbReference>
<dbReference type="NCBIfam" id="TIGR00012">
    <property type="entry name" value="L29"/>
    <property type="match status" value="1"/>
</dbReference>
<dbReference type="PANTHER" id="PTHR10916">
    <property type="entry name" value="60S RIBOSOMAL PROTEIN L35/50S RIBOSOMAL PROTEIN L29"/>
    <property type="match status" value="1"/>
</dbReference>
<dbReference type="PANTHER" id="PTHR10916:SF0">
    <property type="entry name" value="LARGE RIBOSOMAL SUBUNIT PROTEIN UL29C"/>
    <property type="match status" value="1"/>
</dbReference>
<dbReference type="Pfam" id="PF00831">
    <property type="entry name" value="Ribosomal_L29"/>
    <property type="match status" value="1"/>
</dbReference>
<dbReference type="SUPFAM" id="SSF46561">
    <property type="entry name" value="Ribosomal protein L29 (L29p)"/>
    <property type="match status" value="1"/>
</dbReference>
<dbReference type="PROSITE" id="PS00579">
    <property type="entry name" value="RIBOSOMAL_L29"/>
    <property type="match status" value="1"/>
</dbReference>
<gene>
    <name evidence="1" type="primary">rpmC</name>
    <name type="ordered locus">SEN3260</name>
</gene>
<accession>B5R283</accession>
<feature type="chain" id="PRO_1000121810" description="Large ribosomal subunit protein uL29">
    <location>
        <begin position="1"/>
        <end position="63"/>
    </location>
</feature>